<protein>
    <recommendedName>
        <fullName evidence="1">ATP-dependent Clp protease ATP-binding subunit ClpX</fullName>
    </recommendedName>
</protein>
<evidence type="ECO:0000255" key="1">
    <source>
        <dbReference type="HAMAP-Rule" id="MF_00175"/>
    </source>
</evidence>
<evidence type="ECO:0000255" key="2">
    <source>
        <dbReference type="PROSITE-ProRule" id="PRU01250"/>
    </source>
</evidence>
<comment type="function">
    <text evidence="1">ATP-dependent specificity component of the Clp protease. It directs the protease to specific substrates. Can perform chaperone functions in the absence of ClpP.</text>
</comment>
<comment type="subunit">
    <text evidence="1">Component of the ClpX-ClpP complex. Forms a hexameric ring that, in the presence of ATP, binds to fourteen ClpP subunits assembled into a disk-like structure with a central cavity, resembling the structure of eukaryotic proteasomes.</text>
</comment>
<comment type="similarity">
    <text evidence="1">Belongs to the ClpX chaperone family.</text>
</comment>
<gene>
    <name evidence="1" type="primary">clpX</name>
    <name type="ordered locus">Acry_0918</name>
</gene>
<accession>A5FX05</accession>
<keyword id="KW-0067">ATP-binding</keyword>
<keyword id="KW-0143">Chaperone</keyword>
<keyword id="KW-0479">Metal-binding</keyword>
<keyword id="KW-0547">Nucleotide-binding</keyword>
<keyword id="KW-1185">Reference proteome</keyword>
<keyword id="KW-0862">Zinc</keyword>
<name>CLPX_ACICJ</name>
<proteinExistence type="inferred from homology"/>
<reference key="1">
    <citation type="submission" date="2007-05" db="EMBL/GenBank/DDBJ databases">
        <title>Complete sequence of chromosome of Acidiphilium cryptum JF-5.</title>
        <authorList>
            <consortium name="US DOE Joint Genome Institute"/>
            <person name="Copeland A."/>
            <person name="Lucas S."/>
            <person name="Lapidus A."/>
            <person name="Barry K."/>
            <person name="Detter J.C."/>
            <person name="Glavina del Rio T."/>
            <person name="Hammon N."/>
            <person name="Israni S."/>
            <person name="Dalin E."/>
            <person name="Tice H."/>
            <person name="Pitluck S."/>
            <person name="Sims D."/>
            <person name="Brettin T."/>
            <person name="Bruce D."/>
            <person name="Han C."/>
            <person name="Schmutz J."/>
            <person name="Larimer F."/>
            <person name="Land M."/>
            <person name="Hauser L."/>
            <person name="Kyrpides N."/>
            <person name="Kim E."/>
            <person name="Magnuson T."/>
            <person name="Richardson P."/>
        </authorList>
    </citation>
    <scope>NUCLEOTIDE SEQUENCE [LARGE SCALE GENOMIC DNA]</scope>
    <source>
        <strain>JF-5</strain>
    </source>
</reference>
<feature type="chain" id="PRO_1000123814" description="ATP-dependent Clp protease ATP-binding subunit ClpX">
    <location>
        <begin position="1"/>
        <end position="418"/>
    </location>
</feature>
<feature type="domain" description="ClpX-type ZB" evidence="2">
    <location>
        <begin position="2"/>
        <end position="55"/>
    </location>
</feature>
<feature type="binding site" evidence="2">
    <location>
        <position position="14"/>
    </location>
    <ligand>
        <name>Zn(2+)</name>
        <dbReference type="ChEBI" id="CHEBI:29105"/>
    </ligand>
</feature>
<feature type="binding site" evidence="2">
    <location>
        <position position="17"/>
    </location>
    <ligand>
        <name>Zn(2+)</name>
        <dbReference type="ChEBI" id="CHEBI:29105"/>
    </ligand>
</feature>
<feature type="binding site" evidence="2">
    <location>
        <position position="36"/>
    </location>
    <ligand>
        <name>Zn(2+)</name>
        <dbReference type="ChEBI" id="CHEBI:29105"/>
    </ligand>
</feature>
<feature type="binding site" evidence="2">
    <location>
        <position position="39"/>
    </location>
    <ligand>
        <name>Zn(2+)</name>
        <dbReference type="ChEBI" id="CHEBI:29105"/>
    </ligand>
</feature>
<feature type="binding site" evidence="1">
    <location>
        <begin position="118"/>
        <end position="125"/>
    </location>
    <ligand>
        <name>ATP</name>
        <dbReference type="ChEBI" id="CHEBI:30616"/>
    </ligand>
</feature>
<organism>
    <name type="scientific">Acidiphilium cryptum (strain JF-5)</name>
    <dbReference type="NCBI Taxonomy" id="349163"/>
    <lineage>
        <taxon>Bacteria</taxon>
        <taxon>Pseudomonadati</taxon>
        <taxon>Pseudomonadota</taxon>
        <taxon>Alphaproteobacteria</taxon>
        <taxon>Acetobacterales</taxon>
        <taxon>Acidocellaceae</taxon>
        <taxon>Acidiphilium</taxon>
    </lineage>
</organism>
<dbReference type="EMBL" id="CP000697">
    <property type="protein sequence ID" value="ABQ30137.1"/>
    <property type="molecule type" value="Genomic_DNA"/>
</dbReference>
<dbReference type="RefSeq" id="WP_011941871.1">
    <property type="nucleotide sequence ID" value="NC_009484.1"/>
</dbReference>
<dbReference type="SMR" id="A5FX05"/>
<dbReference type="STRING" id="349163.Acry_0918"/>
<dbReference type="KEGG" id="acr:Acry_0918"/>
<dbReference type="eggNOG" id="COG1219">
    <property type="taxonomic scope" value="Bacteria"/>
</dbReference>
<dbReference type="HOGENOM" id="CLU_014218_8_2_5"/>
<dbReference type="Proteomes" id="UP000000245">
    <property type="component" value="Chromosome"/>
</dbReference>
<dbReference type="GO" id="GO:0009376">
    <property type="term" value="C:HslUV protease complex"/>
    <property type="evidence" value="ECO:0007669"/>
    <property type="project" value="TreeGrafter"/>
</dbReference>
<dbReference type="GO" id="GO:0005524">
    <property type="term" value="F:ATP binding"/>
    <property type="evidence" value="ECO:0007669"/>
    <property type="project" value="UniProtKB-UniRule"/>
</dbReference>
<dbReference type="GO" id="GO:0016887">
    <property type="term" value="F:ATP hydrolysis activity"/>
    <property type="evidence" value="ECO:0007669"/>
    <property type="project" value="InterPro"/>
</dbReference>
<dbReference type="GO" id="GO:0140662">
    <property type="term" value="F:ATP-dependent protein folding chaperone"/>
    <property type="evidence" value="ECO:0007669"/>
    <property type="project" value="InterPro"/>
</dbReference>
<dbReference type="GO" id="GO:0046983">
    <property type="term" value="F:protein dimerization activity"/>
    <property type="evidence" value="ECO:0007669"/>
    <property type="project" value="InterPro"/>
</dbReference>
<dbReference type="GO" id="GO:0051082">
    <property type="term" value="F:unfolded protein binding"/>
    <property type="evidence" value="ECO:0007669"/>
    <property type="project" value="UniProtKB-UniRule"/>
</dbReference>
<dbReference type="GO" id="GO:0008270">
    <property type="term" value="F:zinc ion binding"/>
    <property type="evidence" value="ECO:0007669"/>
    <property type="project" value="InterPro"/>
</dbReference>
<dbReference type="GO" id="GO:0051301">
    <property type="term" value="P:cell division"/>
    <property type="evidence" value="ECO:0007669"/>
    <property type="project" value="TreeGrafter"/>
</dbReference>
<dbReference type="GO" id="GO:0051603">
    <property type="term" value="P:proteolysis involved in protein catabolic process"/>
    <property type="evidence" value="ECO:0007669"/>
    <property type="project" value="TreeGrafter"/>
</dbReference>
<dbReference type="CDD" id="cd19497">
    <property type="entry name" value="RecA-like_ClpX"/>
    <property type="match status" value="1"/>
</dbReference>
<dbReference type="FunFam" id="1.10.8.60:FF:000002">
    <property type="entry name" value="ATP-dependent Clp protease ATP-binding subunit ClpX"/>
    <property type="match status" value="1"/>
</dbReference>
<dbReference type="FunFam" id="3.40.50.300:FF:000005">
    <property type="entry name" value="ATP-dependent Clp protease ATP-binding subunit ClpX"/>
    <property type="match status" value="1"/>
</dbReference>
<dbReference type="Gene3D" id="1.10.8.60">
    <property type="match status" value="1"/>
</dbReference>
<dbReference type="Gene3D" id="6.20.220.10">
    <property type="entry name" value="ClpX chaperone, C4-type zinc finger domain"/>
    <property type="match status" value="1"/>
</dbReference>
<dbReference type="Gene3D" id="3.40.50.300">
    <property type="entry name" value="P-loop containing nucleotide triphosphate hydrolases"/>
    <property type="match status" value="1"/>
</dbReference>
<dbReference type="HAMAP" id="MF_00175">
    <property type="entry name" value="ClpX"/>
    <property type="match status" value="1"/>
</dbReference>
<dbReference type="InterPro" id="IPR003593">
    <property type="entry name" value="AAA+_ATPase"/>
</dbReference>
<dbReference type="InterPro" id="IPR050052">
    <property type="entry name" value="ATP-dep_Clp_protease_ClpX"/>
</dbReference>
<dbReference type="InterPro" id="IPR003959">
    <property type="entry name" value="ATPase_AAA_core"/>
</dbReference>
<dbReference type="InterPro" id="IPR019489">
    <property type="entry name" value="Clp_ATPase_C"/>
</dbReference>
<dbReference type="InterPro" id="IPR004487">
    <property type="entry name" value="Clp_protease_ATP-bd_su_ClpX"/>
</dbReference>
<dbReference type="InterPro" id="IPR046425">
    <property type="entry name" value="ClpX_bact"/>
</dbReference>
<dbReference type="InterPro" id="IPR027417">
    <property type="entry name" value="P-loop_NTPase"/>
</dbReference>
<dbReference type="InterPro" id="IPR010603">
    <property type="entry name" value="Znf_CppX_C4"/>
</dbReference>
<dbReference type="InterPro" id="IPR038366">
    <property type="entry name" value="Znf_CppX_C4_sf"/>
</dbReference>
<dbReference type="NCBIfam" id="TIGR00382">
    <property type="entry name" value="clpX"/>
    <property type="match status" value="1"/>
</dbReference>
<dbReference type="NCBIfam" id="NF003745">
    <property type="entry name" value="PRK05342.1"/>
    <property type="match status" value="1"/>
</dbReference>
<dbReference type="PANTHER" id="PTHR48102:SF7">
    <property type="entry name" value="ATP-DEPENDENT CLP PROTEASE ATP-BINDING SUBUNIT CLPX-LIKE, MITOCHONDRIAL"/>
    <property type="match status" value="1"/>
</dbReference>
<dbReference type="PANTHER" id="PTHR48102">
    <property type="entry name" value="ATP-DEPENDENT CLP PROTEASE ATP-BINDING SUBUNIT CLPX-LIKE, MITOCHONDRIAL-RELATED"/>
    <property type="match status" value="1"/>
</dbReference>
<dbReference type="Pfam" id="PF07724">
    <property type="entry name" value="AAA_2"/>
    <property type="match status" value="1"/>
</dbReference>
<dbReference type="Pfam" id="PF10431">
    <property type="entry name" value="ClpB_D2-small"/>
    <property type="match status" value="1"/>
</dbReference>
<dbReference type="Pfam" id="PF06689">
    <property type="entry name" value="zf-C4_ClpX"/>
    <property type="match status" value="1"/>
</dbReference>
<dbReference type="SMART" id="SM00382">
    <property type="entry name" value="AAA"/>
    <property type="match status" value="1"/>
</dbReference>
<dbReference type="SMART" id="SM01086">
    <property type="entry name" value="ClpB_D2-small"/>
    <property type="match status" value="1"/>
</dbReference>
<dbReference type="SMART" id="SM00994">
    <property type="entry name" value="zf-C4_ClpX"/>
    <property type="match status" value="1"/>
</dbReference>
<dbReference type="SUPFAM" id="SSF57716">
    <property type="entry name" value="Glucocorticoid receptor-like (DNA-binding domain)"/>
    <property type="match status" value="1"/>
</dbReference>
<dbReference type="SUPFAM" id="SSF52540">
    <property type="entry name" value="P-loop containing nucleoside triphosphate hydrolases"/>
    <property type="match status" value="1"/>
</dbReference>
<dbReference type="PROSITE" id="PS51902">
    <property type="entry name" value="CLPX_ZB"/>
    <property type="match status" value="1"/>
</dbReference>
<sequence length="418" mass="45759">MSTKSGDSKNTLYCSFCGKSQHEVVKLIAGPTVFICNECVELCMDIIREDNRTHLVKTRDGVPTPREICKVLDDYVIGQDHAKRILSVAVHNHYKRLAHAQKNNDIEIAKSNIMLVGPTGSGKTLLAQTLARILDVPFTMADATTLTEAGYVGEDVENIILKLLQAADYNVERAQRGIVYIDEVDKISRKSDNPSITRDVSGEGVQQALLKIMEGTVASVPPQGGRKHPQQEFLQVDTTNILFICGGAFAGLEKIIAQRGKGSGIGFGADVRDPTEQRTGAILREVEPEDLLKFGLIPEFIGRLPVVATLEDLDEAALIEILTKPKNALVKQYGRLFEMEGVKLNFTEDALKVVAARAIQRKTGARGLRSIMENILLETMFDLPGLDSVEEVVINGEVAEGRANPLFLHGKERAETGS</sequence>